<dbReference type="EMBL" id="CP000919">
    <property type="protein sequence ID" value="ACO18097.1"/>
    <property type="molecule type" value="Genomic_DNA"/>
</dbReference>
<dbReference type="RefSeq" id="WP_000529936.1">
    <property type="nucleotide sequence ID" value="NC_012466.1"/>
</dbReference>
<dbReference type="SMR" id="C1CC12"/>
<dbReference type="GeneID" id="49600535"/>
<dbReference type="KEGG" id="sjj:SPJ_0225"/>
<dbReference type="HOGENOM" id="CLU_058591_0_2_9"/>
<dbReference type="Proteomes" id="UP000002206">
    <property type="component" value="Chromosome"/>
</dbReference>
<dbReference type="GO" id="GO:0022627">
    <property type="term" value="C:cytosolic small ribosomal subunit"/>
    <property type="evidence" value="ECO:0007669"/>
    <property type="project" value="TreeGrafter"/>
</dbReference>
<dbReference type="GO" id="GO:0003729">
    <property type="term" value="F:mRNA binding"/>
    <property type="evidence" value="ECO:0007669"/>
    <property type="project" value="UniProtKB-UniRule"/>
</dbReference>
<dbReference type="GO" id="GO:0019843">
    <property type="term" value="F:rRNA binding"/>
    <property type="evidence" value="ECO:0007669"/>
    <property type="project" value="UniProtKB-UniRule"/>
</dbReference>
<dbReference type="GO" id="GO:0003735">
    <property type="term" value="F:structural constituent of ribosome"/>
    <property type="evidence" value="ECO:0007669"/>
    <property type="project" value="InterPro"/>
</dbReference>
<dbReference type="GO" id="GO:0006412">
    <property type="term" value="P:translation"/>
    <property type="evidence" value="ECO:0007669"/>
    <property type="project" value="UniProtKB-UniRule"/>
</dbReference>
<dbReference type="CDD" id="cd02412">
    <property type="entry name" value="KH-II_30S_S3"/>
    <property type="match status" value="1"/>
</dbReference>
<dbReference type="FunFam" id="3.30.1140.32:FF:000001">
    <property type="entry name" value="30S ribosomal protein S3"/>
    <property type="match status" value="1"/>
</dbReference>
<dbReference type="FunFam" id="3.30.300.20:FF:000001">
    <property type="entry name" value="30S ribosomal protein S3"/>
    <property type="match status" value="1"/>
</dbReference>
<dbReference type="Gene3D" id="3.30.300.20">
    <property type="match status" value="1"/>
</dbReference>
<dbReference type="Gene3D" id="3.30.1140.32">
    <property type="entry name" value="Ribosomal protein S3, C-terminal domain"/>
    <property type="match status" value="1"/>
</dbReference>
<dbReference type="HAMAP" id="MF_01309_B">
    <property type="entry name" value="Ribosomal_uS3_B"/>
    <property type="match status" value="1"/>
</dbReference>
<dbReference type="InterPro" id="IPR004087">
    <property type="entry name" value="KH_dom"/>
</dbReference>
<dbReference type="InterPro" id="IPR015946">
    <property type="entry name" value="KH_dom-like_a/b"/>
</dbReference>
<dbReference type="InterPro" id="IPR004044">
    <property type="entry name" value="KH_dom_type_2"/>
</dbReference>
<dbReference type="InterPro" id="IPR009019">
    <property type="entry name" value="KH_sf_prok-type"/>
</dbReference>
<dbReference type="InterPro" id="IPR036419">
    <property type="entry name" value="Ribosomal_S3_C_sf"/>
</dbReference>
<dbReference type="InterPro" id="IPR005704">
    <property type="entry name" value="Ribosomal_uS3_bac-typ"/>
</dbReference>
<dbReference type="InterPro" id="IPR001351">
    <property type="entry name" value="Ribosomal_uS3_C"/>
</dbReference>
<dbReference type="InterPro" id="IPR018280">
    <property type="entry name" value="Ribosomal_uS3_CS"/>
</dbReference>
<dbReference type="NCBIfam" id="TIGR01009">
    <property type="entry name" value="rpsC_bact"/>
    <property type="match status" value="1"/>
</dbReference>
<dbReference type="PANTHER" id="PTHR11760">
    <property type="entry name" value="30S/40S RIBOSOMAL PROTEIN S3"/>
    <property type="match status" value="1"/>
</dbReference>
<dbReference type="PANTHER" id="PTHR11760:SF19">
    <property type="entry name" value="SMALL RIBOSOMAL SUBUNIT PROTEIN US3C"/>
    <property type="match status" value="1"/>
</dbReference>
<dbReference type="Pfam" id="PF07650">
    <property type="entry name" value="KH_2"/>
    <property type="match status" value="1"/>
</dbReference>
<dbReference type="Pfam" id="PF00189">
    <property type="entry name" value="Ribosomal_S3_C"/>
    <property type="match status" value="1"/>
</dbReference>
<dbReference type="SMART" id="SM00322">
    <property type="entry name" value="KH"/>
    <property type="match status" value="1"/>
</dbReference>
<dbReference type="SUPFAM" id="SSF54814">
    <property type="entry name" value="Prokaryotic type KH domain (KH-domain type II)"/>
    <property type="match status" value="1"/>
</dbReference>
<dbReference type="SUPFAM" id="SSF54821">
    <property type="entry name" value="Ribosomal protein S3 C-terminal domain"/>
    <property type="match status" value="1"/>
</dbReference>
<dbReference type="PROSITE" id="PS50823">
    <property type="entry name" value="KH_TYPE_2"/>
    <property type="match status" value="1"/>
</dbReference>
<dbReference type="PROSITE" id="PS00548">
    <property type="entry name" value="RIBOSOMAL_S3"/>
    <property type="match status" value="1"/>
</dbReference>
<accession>C1CC12</accession>
<proteinExistence type="inferred from homology"/>
<reference key="1">
    <citation type="journal article" date="2010" name="Genome Biol.">
        <title>Structure and dynamics of the pan-genome of Streptococcus pneumoniae and closely related species.</title>
        <authorList>
            <person name="Donati C."/>
            <person name="Hiller N.L."/>
            <person name="Tettelin H."/>
            <person name="Muzzi A."/>
            <person name="Croucher N.J."/>
            <person name="Angiuoli S.V."/>
            <person name="Oggioni M."/>
            <person name="Dunning Hotopp J.C."/>
            <person name="Hu F.Z."/>
            <person name="Riley D.R."/>
            <person name="Covacci A."/>
            <person name="Mitchell T.J."/>
            <person name="Bentley S.D."/>
            <person name="Kilian M."/>
            <person name="Ehrlich G.D."/>
            <person name="Rappuoli R."/>
            <person name="Moxon E.R."/>
            <person name="Masignani V."/>
        </authorList>
    </citation>
    <scope>NUCLEOTIDE SEQUENCE [LARGE SCALE GENOMIC DNA]</scope>
    <source>
        <strain>JJA</strain>
    </source>
</reference>
<name>RS3_STRZJ</name>
<evidence type="ECO:0000255" key="1">
    <source>
        <dbReference type="HAMAP-Rule" id="MF_01309"/>
    </source>
</evidence>
<evidence type="ECO:0000305" key="2"/>
<feature type="chain" id="PRO_1000165515" description="Small ribosomal subunit protein uS3">
    <location>
        <begin position="1"/>
        <end position="217"/>
    </location>
</feature>
<feature type="domain" description="KH type-2" evidence="1">
    <location>
        <begin position="38"/>
        <end position="106"/>
    </location>
</feature>
<comment type="function">
    <text evidence="1">Binds the lower part of the 30S subunit head. Binds mRNA in the 70S ribosome, positioning it for translation.</text>
</comment>
<comment type="subunit">
    <text evidence="1">Part of the 30S ribosomal subunit. Forms a tight complex with proteins S10 and S14.</text>
</comment>
<comment type="similarity">
    <text evidence="1">Belongs to the universal ribosomal protein uS3 family.</text>
</comment>
<keyword id="KW-0687">Ribonucleoprotein</keyword>
<keyword id="KW-0689">Ribosomal protein</keyword>
<keyword id="KW-0694">RNA-binding</keyword>
<keyword id="KW-0699">rRNA-binding</keyword>
<organism>
    <name type="scientific">Streptococcus pneumoniae (strain JJA)</name>
    <dbReference type="NCBI Taxonomy" id="488222"/>
    <lineage>
        <taxon>Bacteria</taxon>
        <taxon>Bacillati</taxon>
        <taxon>Bacillota</taxon>
        <taxon>Bacilli</taxon>
        <taxon>Lactobacillales</taxon>
        <taxon>Streptococcaceae</taxon>
        <taxon>Streptococcus</taxon>
    </lineage>
</organism>
<protein>
    <recommendedName>
        <fullName evidence="1">Small ribosomal subunit protein uS3</fullName>
    </recommendedName>
    <alternativeName>
        <fullName evidence="2">30S ribosomal protein S3</fullName>
    </alternativeName>
</protein>
<sequence>MGQKVHPIGMRVGIIRDWDAKWYAEKEYADYLHEDLAIRKFVQKELADAAVSTIEIERAVNKVNVSLHTAKPGMVIGKGGANVDALRAKLNKLTGKQVHINIIEIKQPDLDAHLVGEGIARQLEQRVAFRRAQKQAIQRAMRAGAKGIKTQVSGRLNGADIARAEGYSEGTVPLHTLRADIDYAWEEADTTYGKLGVKVWIYRGEVLPARKNTKGGK</sequence>
<gene>
    <name evidence="1" type="primary">rpsC</name>
    <name type="ordered locus">SPJ_0225</name>
</gene>